<comment type="function">
    <text evidence="1">Cell wall formation. Adds enolpyruvyl to UDP-N-acetylglucosamine.</text>
</comment>
<comment type="catalytic activity">
    <reaction evidence="1">
        <text>phosphoenolpyruvate + UDP-N-acetyl-alpha-D-glucosamine = UDP-N-acetyl-3-O-(1-carboxyvinyl)-alpha-D-glucosamine + phosphate</text>
        <dbReference type="Rhea" id="RHEA:18681"/>
        <dbReference type="ChEBI" id="CHEBI:43474"/>
        <dbReference type="ChEBI" id="CHEBI:57705"/>
        <dbReference type="ChEBI" id="CHEBI:58702"/>
        <dbReference type="ChEBI" id="CHEBI:68483"/>
        <dbReference type="EC" id="2.5.1.7"/>
    </reaction>
</comment>
<comment type="pathway">
    <text evidence="1">Cell wall biogenesis; peptidoglycan biosynthesis.</text>
</comment>
<comment type="subcellular location">
    <subcellularLocation>
        <location evidence="1">Cytoplasm</location>
    </subcellularLocation>
</comment>
<comment type="similarity">
    <text evidence="1">Belongs to the EPSP synthase family. MurA subfamily.</text>
</comment>
<proteinExistence type="inferred from homology"/>
<reference key="1">
    <citation type="submission" date="2008-12" db="EMBL/GenBank/DDBJ databases">
        <title>Complete sequence of chromosome of Methylobacterium chloromethanicum CM4.</title>
        <authorList>
            <consortium name="US DOE Joint Genome Institute"/>
            <person name="Lucas S."/>
            <person name="Copeland A."/>
            <person name="Lapidus A."/>
            <person name="Glavina del Rio T."/>
            <person name="Dalin E."/>
            <person name="Tice H."/>
            <person name="Bruce D."/>
            <person name="Goodwin L."/>
            <person name="Pitluck S."/>
            <person name="Chertkov O."/>
            <person name="Brettin T."/>
            <person name="Detter J.C."/>
            <person name="Han C."/>
            <person name="Larimer F."/>
            <person name="Land M."/>
            <person name="Hauser L."/>
            <person name="Kyrpides N."/>
            <person name="Mikhailova N."/>
            <person name="Marx C."/>
            <person name="Richardson P."/>
        </authorList>
    </citation>
    <scope>NUCLEOTIDE SEQUENCE [LARGE SCALE GENOMIC DNA]</scope>
    <source>
        <strain>CM4 / NCIMB 13688</strain>
    </source>
</reference>
<gene>
    <name evidence="1" type="primary">murA</name>
    <name type="ordered locus">Mchl_2264</name>
</gene>
<sequence length="429" mass="45238">MDRIHITGGTPLNGTIPISGAKNAALPLMIASLLTGETLELINVPRLADIAALTRILGNHGVDHMVVGKRPGQTAETGQTVRLTASNVIDTTAPYELVSTMRASFWVIAPLLARFGEAKVSLPGGCAIGTRPVDLLLMALEKLGAEIEIDGGYVVAKTKNGLRGTEIDFPKVTVGGTHVALMAAALAYGTTVLDNAAREPEVVDLAECLIKMGARIEGAGTSRIVVEGVARLGGTRHEVLPDRIETGTYAMAVAMTGGDVSLVNTRTDLLASALETLASTGTEVTALPDGIRVRRNGGGISPADVTTDPFPGFPTDLQAQFMALMTLAKGQSRIRETIFENRFMHVQELARLGARIRLDGDLAVVEGVERLKGAPVMATDLRASVSLVIGALAAEGETQINRVYHLDRGFEALEAKLARCGAQIERVRA</sequence>
<accession>B7KYA2</accession>
<organism>
    <name type="scientific">Methylorubrum extorquens (strain CM4 / NCIMB 13688)</name>
    <name type="common">Methylobacterium extorquens</name>
    <dbReference type="NCBI Taxonomy" id="440085"/>
    <lineage>
        <taxon>Bacteria</taxon>
        <taxon>Pseudomonadati</taxon>
        <taxon>Pseudomonadota</taxon>
        <taxon>Alphaproteobacteria</taxon>
        <taxon>Hyphomicrobiales</taxon>
        <taxon>Methylobacteriaceae</taxon>
        <taxon>Methylorubrum</taxon>
    </lineage>
</organism>
<name>MURA_METC4</name>
<protein>
    <recommendedName>
        <fullName evidence="1">UDP-N-acetylglucosamine 1-carboxyvinyltransferase</fullName>
        <ecNumber evidence="1">2.5.1.7</ecNumber>
    </recommendedName>
    <alternativeName>
        <fullName evidence="1">Enoylpyruvate transferase</fullName>
    </alternativeName>
    <alternativeName>
        <fullName evidence="1">UDP-N-acetylglucosamine enolpyruvyl transferase</fullName>
        <shortName evidence="1">EPT</shortName>
    </alternativeName>
</protein>
<dbReference type="EC" id="2.5.1.7" evidence="1"/>
<dbReference type="EMBL" id="CP001298">
    <property type="protein sequence ID" value="ACK83111.1"/>
    <property type="molecule type" value="Genomic_DNA"/>
</dbReference>
<dbReference type="RefSeq" id="WP_003601962.1">
    <property type="nucleotide sequence ID" value="NC_011757.1"/>
</dbReference>
<dbReference type="SMR" id="B7KYA2"/>
<dbReference type="KEGG" id="mch:Mchl_2264"/>
<dbReference type="HOGENOM" id="CLU_027387_0_0_5"/>
<dbReference type="UniPathway" id="UPA00219"/>
<dbReference type="Proteomes" id="UP000002385">
    <property type="component" value="Chromosome"/>
</dbReference>
<dbReference type="GO" id="GO:0005737">
    <property type="term" value="C:cytoplasm"/>
    <property type="evidence" value="ECO:0007669"/>
    <property type="project" value="UniProtKB-SubCell"/>
</dbReference>
<dbReference type="GO" id="GO:0008760">
    <property type="term" value="F:UDP-N-acetylglucosamine 1-carboxyvinyltransferase activity"/>
    <property type="evidence" value="ECO:0007669"/>
    <property type="project" value="UniProtKB-UniRule"/>
</dbReference>
<dbReference type="GO" id="GO:0051301">
    <property type="term" value="P:cell division"/>
    <property type="evidence" value="ECO:0007669"/>
    <property type="project" value="UniProtKB-KW"/>
</dbReference>
<dbReference type="GO" id="GO:0071555">
    <property type="term" value="P:cell wall organization"/>
    <property type="evidence" value="ECO:0007669"/>
    <property type="project" value="UniProtKB-KW"/>
</dbReference>
<dbReference type="GO" id="GO:0009252">
    <property type="term" value="P:peptidoglycan biosynthetic process"/>
    <property type="evidence" value="ECO:0007669"/>
    <property type="project" value="UniProtKB-UniRule"/>
</dbReference>
<dbReference type="GO" id="GO:0008360">
    <property type="term" value="P:regulation of cell shape"/>
    <property type="evidence" value="ECO:0007669"/>
    <property type="project" value="UniProtKB-KW"/>
</dbReference>
<dbReference type="GO" id="GO:0019277">
    <property type="term" value="P:UDP-N-acetylgalactosamine biosynthetic process"/>
    <property type="evidence" value="ECO:0007669"/>
    <property type="project" value="InterPro"/>
</dbReference>
<dbReference type="CDD" id="cd01555">
    <property type="entry name" value="UdpNAET"/>
    <property type="match status" value="1"/>
</dbReference>
<dbReference type="FunFam" id="3.65.10.10:FF:000001">
    <property type="entry name" value="UDP-N-acetylglucosamine 1-carboxyvinyltransferase"/>
    <property type="match status" value="1"/>
</dbReference>
<dbReference type="Gene3D" id="3.65.10.10">
    <property type="entry name" value="Enolpyruvate transferase domain"/>
    <property type="match status" value="2"/>
</dbReference>
<dbReference type="HAMAP" id="MF_00111">
    <property type="entry name" value="MurA"/>
    <property type="match status" value="1"/>
</dbReference>
<dbReference type="InterPro" id="IPR001986">
    <property type="entry name" value="Enolpyruvate_Tfrase_dom"/>
</dbReference>
<dbReference type="InterPro" id="IPR036968">
    <property type="entry name" value="Enolpyruvate_Tfrase_sf"/>
</dbReference>
<dbReference type="InterPro" id="IPR050068">
    <property type="entry name" value="MurA_subfamily"/>
</dbReference>
<dbReference type="InterPro" id="IPR013792">
    <property type="entry name" value="RNA3'P_cycl/enolpyr_Trfase_a/b"/>
</dbReference>
<dbReference type="InterPro" id="IPR005750">
    <property type="entry name" value="UDP_GlcNAc_COvinyl_MurA"/>
</dbReference>
<dbReference type="NCBIfam" id="TIGR01072">
    <property type="entry name" value="murA"/>
    <property type="match status" value="1"/>
</dbReference>
<dbReference type="NCBIfam" id="NF006873">
    <property type="entry name" value="PRK09369.1"/>
    <property type="match status" value="1"/>
</dbReference>
<dbReference type="PANTHER" id="PTHR43783">
    <property type="entry name" value="UDP-N-ACETYLGLUCOSAMINE 1-CARBOXYVINYLTRANSFERASE"/>
    <property type="match status" value="1"/>
</dbReference>
<dbReference type="PANTHER" id="PTHR43783:SF1">
    <property type="entry name" value="UDP-N-ACETYLGLUCOSAMINE 1-CARBOXYVINYLTRANSFERASE"/>
    <property type="match status" value="1"/>
</dbReference>
<dbReference type="Pfam" id="PF00275">
    <property type="entry name" value="EPSP_synthase"/>
    <property type="match status" value="1"/>
</dbReference>
<dbReference type="SUPFAM" id="SSF55205">
    <property type="entry name" value="EPT/RTPC-like"/>
    <property type="match status" value="1"/>
</dbReference>
<evidence type="ECO:0000255" key="1">
    <source>
        <dbReference type="HAMAP-Rule" id="MF_00111"/>
    </source>
</evidence>
<keyword id="KW-0131">Cell cycle</keyword>
<keyword id="KW-0132">Cell division</keyword>
<keyword id="KW-0133">Cell shape</keyword>
<keyword id="KW-0961">Cell wall biogenesis/degradation</keyword>
<keyword id="KW-0963">Cytoplasm</keyword>
<keyword id="KW-0573">Peptidoglycan synthesis</keyword>
<keyword id="KW-0670">Pyruvate</keyword>
<keyword id="KW-0808">Transferase</keyword>
<feature type="chain" id="PRO_1000119118" description="UDP-N-acetylglucosamine 1-carboxyvinyltransferase">
    <location>
        <begin position="1"/>
        <end position="429"/>
    </location>
</feature>
<feature type="active site" description="Proton donor" evidence="1">
    <location>
        <position position="126"/>
    </location>
</feature>
<feature type="binding site" evidence="1">
    <location>
        <begin position="22"/>
        <end position="23"/>
    </location>
    <ligand>
        <name>phosphoenolpyruvate</name>
        <dbReference type="ChEBI" id="CHEBI:58702"/>
    </ligand>
</feature>
<feature type="binding site" evidence="1">
    <location>
        <position position="102"/>
    </location>
    <ligand>
        <name>UDP-N-acetyl-alpha-D-glucosamine</name>
        <dbReference type="ChEBI" id="CHEBI:57705"/>
    </ligand>
</feature>
<feature type="binding site" evidence="1">
    <location>
        <begin position="131"/>
        <end position="135"/>
    </location>
    <ligand>
        <name>UDP-N-acetyl-alpha-D-glucosamine</name>
        <dbReference type="ChEBI" id="CHEBI:57705"/>
    </ligand>
</feature>
<feature type="binding site" evidence="1">
    <location>
        <position position="316"/>
    </location>
    <ligand>
        <name>UDP-N-acetyl-alpha-D-glucosamine</name>
        <dbReference type="ChEBI" id="CHEBI:57705"/>
    </ligand>
</feature>
<feature type="binding site" evidence="1">
    <location>
        <position position="338"/>
    </location>
    <ligand>
        <name>UDP-N-acetyl-alpha-D-glucosamine</name>
        <dbReference type="ChEBI" id="CHEBI:57705"/>
    </ligand>
</feature>
<feature type="modified residue" description="2-(S-cysteinyl)pyruvic acid O-phosphothioketal" evidence="1">
    <location>
        <position position="126"/>
    </location>
</feature>